<comment type="subcellular location">
    <subcellularLocation>
        <location evidence="4">Secreted</location>
    </subcellularLocation>
</comment>
<comment type="tissue specificity">
    <text evidence="4">Expressed by the venom duct.</text>
</comment>
<comment type="domain">
    <text evidence="4">The cysteine framework is XIV (C-C-C-C).</text>
</comment>
<comment type="PTM">
    <text evidence="4">Contains 2 disulfide bonds.</text>
</comment>
<comment type="similarity">
    <text evidence="4">Belongs to the conotoxin L superfamily.</text>
</comment>
<proteinExistence type="inferred from homology"/>
<organism>
    <name type="scientific">Californiconus californicus</name>
    <name type="common">California cone</name>
    <name type="synonym">Conus californicus</name>
    <dbReference type="NCBI Taxonomy" id="1736779"/>
    <lineage>
        <taxon>Eukaryota</taxon>
        <taxon>Metazoa</taxon>
        <taxon>Spiralia</taxon>
        <taxon>Lophotrochozoa</taxon>
        <taxon>Mollusca</taxon>
        <taxon>Gastropoda</taxon>
        <taxon>Caenogastropoda</taxon>
        <taxon>Neogastropoda</taxon>
        <taxon>Conoidea</taxon>
        <taxon>Conidae</taxon>
        <taxon>Californiconus</taxon>
    </lineage>
</organism>
<dbReference type="EMBL" id="FJ959139">
    <property type="protein sequence ID" value="ADB93109.1"/>
    <property type="molecule type" value="Genomic_DNA"/>
</dbReference>
<dbReference type="ConoServer" id="4024">
    <property type="toxin name" value="Cal14.8 precursor"/>
</dbReference>
<dbReference type="GO" id="GO:0005576">
    <property type="term" value="C:extracellular region"/>
    <property type="evidence" value="ECO:0007669"/>
    <property type="project" value="UniProtKB-SubCell"/>
</dbReference>
<dbReference type="GO" id="GO:0090729">
    <property type="term" value="F:toxin activity"/>
    <property type="evidence" value="ECO:0007669"/>
    <property type="project" value="UniProtKB-KW"/>
</dbReference>
<protein>
    <recommendedName>
        <fullName evidence="3">Conotoxin Cl14.8</fullName>
    </recommendedName>
</protein>
<feature type="signal peptide" evidence="2">
    <location>
        <begin position="1"/>
        <end position="19"/>
    </location>
</feature>
<feature type="propeptide" id="PRO_0000415026" evidence="1">
    <location>
        <begin position="20"/>
        <end position="47"/>
    </location>
</feature>
<feature type="peptide" id="PRO_0000415027" description="Conotoxin Cl14.8" evidence="4">
    <location>
        <begin position="50"/>
        <end position="73"/>
    </location>
</feature>
<name>CLE8_CONCL</name>
<keyword id="KW-1015">Disulfide bond</keyword>
<keyword id="KW-0528">Neurotoxin</keyword>
<keyword id="KW-0964">Secreted</keyword>
<keyword id="KW-0732">Signal</keyword>
<keyword id="KW-0800">Toxin</keyword>
<accession>D6C4J7</accession>
<sequence>MKLSVTFIALMLTMTLTQGFVLQAIDGRDNSGLDDLSEADSMEHQLQRRDCGRCPLGQYCDAEAGMCKPTLIM</sequence>
<evidence type="ECO:0000250" key="1"/>
<evidence type="ECO:0000255" key="2"/>
<evidence type="ECO:0000303" key="3">
    <source>
    </source>
</evidence>
<evidence type="ECO:0000305" key="4"/>
<reference key="1">
    <citation type="journal article" date="2010" name="Mol. Phylogenet. Evol.">
        <title>Evolution of Conus peptide toxins: analysis of Conus californicus Reeve, 1844.</title>
        <authorList>
            <person name="Biggs J.S."/>
            <person name="Watkins M."/>
            <person name="Puillandre N."/>
            <person name="Ownby J.P."/>
            <person name="Lopez-Vera E."/>
            <person name="Christensen S."/>
            <person name="Moreno K.J."/>
            <person name="Bernaldez J."/>
            <person name="Licea-Navarro A."/>
            <person name="Corneli P.S."/>
            <person name="Olivera B.M."/>
        </authorList>
    </citation>
    <scope>NUCLEOTIDE SEQUENCE [GENOMIC DNA]</scope>
</reference>